<evidence type="ECO:0000255" key="1">
    <source>
        <dbReference type="HAMAP-Rule" id="MF_00295"/>
    </source>
</evidence>
<keyword id="KW-0012">Acyltransferase</keyword>
<keyword id="KW-0028">Amino-acid biosynthesis</keyword>
<keyword id="KW-0963">Cytoplasm</keyword>
<keyword id="KW-0486">Methionine biosynthesis</keyword>
<keyword id="KW-1185">Reference proteome</keyword>
<keyword id="KW-0808">Transferase</keyword>
<dbReference type="EC" id="2.3.1.46" evidence="1"/>
<dbReference type="EMBL" id="AM942759">
    <property type="protein sequence ID" value="CAR45456.1"/>
    <property type="molecule type" value="Genomic_DNA"/>
</dbReference>
<dbReference type="SMR" id="B4EYS9"/>
<dbReference type="EnsemblBacteria" id="CAR45456">
    <property type="protein sequence ID" value="CAR45456"/>
    <property type="gene ID" value="PMI2765"/>
</dbReference>
<dbReference type="GeneID" id="6803594"/>
<dbReference type="KEGG" id="pmr:PMI2765"/>
<dbReference type="eggNOG" id="COG1897">
    <property type="taxonomic scope" value="Bacteria"/>
</dbReference>
<dbReference type="HOGENOM" id="CLU_057851_0_1_6"/>
<dbReference type="UniPathway" id="UPA00051">
    <property type="reaction ID" value="UER00075"/>
</dbReference>
<dbReference type="Proteomes" id="UP000008319">
    <property type="component" value="Chromosome"/>
</dbReference>
<dbReference type="GO" id="GO:0005737">
    <property type="term" value="C:cytoplasm"/>
    <property type="evidence" value="ECO:0007669"/>
    <property type="project" value="UniProtKB-SubCell"/>
</dbReference>
<dbReference type="GO" id="GO:0004414">
    <property type="term" value="F:homoserine O-acetyltransferase activity"/>
    <property type="evidence" value="ECO:0007669"/>
    <property type="project" value="UniProtKB-UniRule"/>
</dbReference>
<dbReference type="GO" id="GO:0008899">
    <property type="term" value="F:homoserine O-succinyltransferase activity"/>
    <property type="evidence" value="ECO:0007669"/>
    <property type="project" value="UniProtKB-EC"/>
</dbReference>
<dbReference type="GO" id="GO:0019281">
    <property type="term" value="P:L-methionine biosynthetic process from homoserine via O-succinyl-L-homoserine and cystathionine"/>
    <property type="evidence" value="ECO:0007669"/>
    <property type="project" value="InterPro"/>
</dbReference>
<dbReference type="CDD" id="cd03131">
    <property type="entry name" value="GATase1_HTS"/>
    <property type="match status" value="1"/>
</dbReference>
<dbReference type="FunFam" id="3.40.50.880:FF:000004">
    <property type="entry name" value="Homoserine O-succinyltransferase"/>
    <property type="match status" value="1"/>
</dbReference>
<dbReference type="Gene3D" id="3.40.50.880">
    <property type="match status" value="1"/>
</dbReference>
<dbReference type="HAMAP" id="MF_00295">
    <property type="entry name" value="MetA_acyltransf"/>
    <property type="match status" value="1"/>
</dbReference>
<dbReference type="InterPro" id="IPR029062">
    <property type="entry name" value="Class_I_gatase-like"/>
</dbReference>
<dbReference type="InterPro" id="IPR005697">
    <property type="entry name" value="HST_MetA"/>
</dbReference>
<dbReference type="InterPro" id="IPR033752">
    <property type="entry name" value="MetA_family"/>
</dbReference>
<dbReference type="NCBIfam" id="TIGR01001">
    <property type="entry name" value="metA"/>
    <property type="match status" value="1"/>
</dbReference>
<dbReference type="PANTHER" id="PTHR20919">
    <property type="entry name" value="HOMOSERINE O-SUCCINYLTRANSFERASE"/>
    <property type="match status" value="1"/>
</dbReference>
<dbReference type="PANTHER" id="PTHR20919:SF0">
    <property type="entry name" value="HOMOSERINE O-SUCCINYLTRANSFERASE"/>
    <property type="match status" value="1"/>
</dbReference>
<dbReference type="Pfam" id="PF04204">
    <property type="entry name" value="HTS"/>
    <property type="match status" value="1"/>
</dbReference>
<dbReference type="PIRSF" id="PIRSF000450">
    <property type="entry name" value="H_ser_succinyltr"/>
    <property type="match status" value="1"/>
</dbReference>
<dbReference type="SUPFAM" id="SSF52317">
    <property type="entry name" value="Class I glutamine amidotransferase-like"/>
    <property type="match status" value="1"/>
</dbReference>
<comment type="function">
    <text evidence="1">Transfers a succinyl group from succinyl-CoA to L-homoserine, forming succinyl-L-homoserine.</text>
</comment>
<comment type="catalytic activity">
    <reaction evidence="1">
        <text>L-homoserine + succinyl-CoA = O-succinyl-L-homoserine + CoA</text>
        <dbReference type="Rhea" id="RHEA:22008"/>
        <dbReference type="ChEBI" id="CHEBI:57287"/>
        <dbReference type="ChEBI" id="CHEBI:57292"/>
        <dbReference type="ChEBI" id="CHEBI:57476"/>
        <dbReference type="ChEBI" id="CHEBI:57661"/>
        <dbReference type="EC" id="2.3.1.46"/>
    </reaction>
</comment>
<comment type="pathway">
    <text evidence="1">Amino-acid biosynthesis; L-methionine biosynthesis via de novo pathway; O-succinyl-L-homoserine from L-homoserine: step 1/1.</text>
</comment>
<comment type="subcellular location">
    <subcellularLocation>
        <location evidence="1">Cytoplasm</location>
    </subcellularLocation>
</comment>
<comment type="similarity">
    <text evidence="1">Belongs to the MetA family.</text>
</comment>
<protein>
    <recommendedName>
        <fullName evidence="1">Homoserine O-succinyltransferase</fullName>
        <shortName evidence="1">HST</shortName>
        <ecNumber evidence="1">2.3.1.46</ecNumber>
    </recommendedName>
    <alternativeName>
        <fullName evidence="1">Homoserine transsuccinylase</fullName>
        <shortName evidence="1">HTS</shortName>
    </alternativeName>
</protein>
<sequence>MPIRVPDELPAVSCLRNENVFVMTSSRASIQDIRPLKVLLLNLMPKKIETENQFLRLLSNSPLQIDIQLLRIDSRVPKNTPVEHLDTFYCDFAQIKEQNFDGLIVTGAPLGLVEFEDVAYWEEIKEIITWAKEHVTSTLFICWAAQAGLNILYDLPKYTLKQKISGVYRHTTCDPFALLTRGFDETFFAPHSRYAGFPVEFIQQNTDLEILATSEQAGAYLFASKDKRVVFATGHPEYDPNTLADEYHRDVKAGLAPQLPENYFPDNNPNKKPLVSWRSHGHLLFANWLNYYVYQITPFDLAQMNPTLD</sequence>
<accession>B4EYS9</accession>
<gene>
    <name evidence="1" type="primary">metAS</name>
    <name type="ordered locus">PMI2765</name>
</gene>
<reference key="1">
    <citation type="journal article" date="2008" name="J. Bacteriol.">
        <title>Complete genome sequence of uropathogenic Proteus mirabilis, a master of both adherence and motility.</title>
        <authorList>
            <person name="Pearson M.M."/>
            <person name="Sebaihia M."/>
            <person name="Churcher C."/>
            <person name="Quail M.A."/>
            <person name="Seshasayee A.S."/>
            <person name="Luscombe N.M."/>
            <person name="Abdellah Z."/>
            <person name="Arrosmith C."/>
            <person name="Atkin B."/>
            <person name="Chillingworth T."/>
            <person name="Hauser H."/>
            <person name="Jagels K."/>
            <person name="Moule S."/>
            <person name="Mungall K."/>
            <person name="Norbertczak H."/>
            <person name="Rabbinowitsch E."/>
            <person name="Walker D."/>
            <person name="Whithead S."/>
            <person name="Thomson N.R."/>
            <person name="Rather P.N."/>
            <person name="Parkhill J."/>
            <person name="Mobley H.L.T."/>
        </authorList>
    </citation>
    <scope>NUCLEOTIDE SEQUENCE [LARGE SCALE GENOMIC DNA]</scope>
    <source>
        <strain>HI4320</strain>
    </source>
</reference>
<feature type="chain" id="PRO_1000115184" description="Homoserine O-succinyltransferase">
    <location>
        <begin position="1"/>
        <end position="309"/>
    </location>
</feature>
<feature type="active site" description="Acyl-thioester intermediate" evidence="1">
    <location>
        <position position="142"/>
    </location>
</feature>
<feature type="active site" description="Proton acceptor" evidence="1">
    <location>
        <position position="235"/>
    </location>
</feature>
<feature type="active site" evidence="1">
    <location>
        <position position="237"/>
    </location>
</feature>
<feature type="binding site" evidence="1">
    <location>
        <position position="163"/>
    </location>
    <ligand>
        <name>substrate</name>
    </ligand>
</feature>
<feature type="binding site" evidence="1">
    <location>
        <position position="192"/>
    </location>
    <ligand>
        <name>substrate</name>
    </ligand>
</feature>
<feature type="binding site" evidence="1">
    <location>
        <position position="249"/>
    </location>
    <ligand>
        <name>substrate</name>
    </ligand>
</feature>
<feature type="site" description="Important for acyl-CoA specificity" evidence="1">
    <location>
        <position position="111"/>
    </location>
</feature>
<feature type="site" description="Important for substrate specificity" evidence="1">
    <location>
        <position position="192"/>
    </location>
</feature>
<proteinExistence type="inferred from homology"/>
<name>METAS_PROMH</name>
<organism>
    <name type="scientific">Proteus mirabilis (strain HI4320)</name>
    <dbReference type="NCBI Taxonomy" id="529507"/>
    <lineage>
        <taxon>Bacteria</taxon>
        <taxon>Pseudomonadati</taxon>
        <taxon>Pseudomonadota</taxon>
        <taxon>Gammaproteobacteria</taxon>
        <taxon>Enterobacterales</taxon>
        <taxon>Morganellaceae</taxon>
        <taxon>Proteus</taxon>
    </lineage>
</organism>